<proteinExistence type="inferred from homology"/>
<sequence length="715" mass="77256">MIYEGKAITVKALESGIVELKFDLKGESVNKFNRLTLNELRQAVDAIKADASVKGVIVSSGKDVFIVGADITEFVDNFKLPEAELVAGNLEANRIFSDFEDLEVPTVAAINGIALGGGLEMCLAADYRIMSSSAKIGLPEVKLGIYPGFGGTVRLPRLIGSDNAIEWIAAGKENRAEDALKVGAVDAVVAPELLQAGALDLIKRAISGELDHKAKRQPKLEKLKLNAIEQMMAFETAKGFVAGQAGPNYPAPVEAIKTIQKAANFGRDKALEVEAAGFAKLARTSVAESLIGLFLNDQELKRKAKAHDEIAHDVKQAAVLGAGIMGGGIAYQSAVKGTPILMKDIREEAIQLGLNEASKLLGKRVEKGRLTPAKMAEALNAIRPTLSYGDFGNVDIVVEAVVENPKVKQAVLAEVEGQVKEDAILASNTSTISINLLAKALKRPENFVGMHFFNPVHMMPLVEVIRGEKSSEVAVATTVAYAKKMGKNPIVVNDCPGFLVNRVLFPYFGGFAKLVSAGVDFVRIDKVMEKFGWPMGPAYLMDVVGIDTGHHGRDVMAEGFPDRMKDDRRSAVDALYEANRLGQKNGKGFYAYETDKRGKPKKVADASVLDVLKPVIFEQREVSDEDIINWMMVPLCLETVRCLEDGIVETAAEADMGLVYGIGFPPFRGGALRYIDSIGVAEFVALADKYADLGPLYHATAKLREMAKNGQRFFN</sequence>
<reference key="1">
    <citation type="journal article" date="2006" name="Nat. Biotechnol.">
        <title>Complete genome sequence of the entomopathogenic and metabolically versatile soil bacterium Pseudomonas entomophila.</title>
        <authorList>
            <person name="Vodovar N."/>
            <person name="Vallenet D."/>
            <person name="Cruveiller S."/>
            <person name="Rouy Z."/>
            <person name="Barbe V."/>
            <person name="Acosta C."/>
            <person name="Cattolico L."/>
            <person name="Jubin C."/>
            <person name="Lajus A."/>
            <person name="Segurens B."/>
            <person name="Vacherie B."/>
            <person name="Wincker P."/>
            <person name="Weissenbach J."/>
            <person name="Lemaitre B."/>
            <person name="Medigue C."/>
            <person name="Boccard F."/>
        </authorList>
    </citation>
    <scope>NUCLEOTIDE SEQUENCE [LARGE SCALE GENOMIC DNA]</scope>
    <source>
        <strain>L48</strain>
    </source>
</reference>
<evidence type="ECO:0000255" key="1">
    <source>
        <dbReference type="HAMAP-Rule" id="MF_01621"/>
    </source>
</evidence>
<dbReference type="EC" id="4.2.1.17" evidence="1"/>
<dbReference type="EC" id="5.1.2.3" evidence="1"/>
<dbReference type="EC" id="5.3.3.8" evidence="1"/>
<dbReference type="EC" id="1.1.1.35" evidence="1"/>
<dbReference type="EMBL" id="CT573326">
    <property type="protein sequence ID" value="CAK16448.1"/>
    <property type="molecule type" value="Genomic_DNA"/>
</dbReference>
<dbReference type="RefSeq" id="WP_011534825.1">
    <property type="nucleotide sequence ID" value="NC_008027.1"/>
</dbReference>
<dbReference type="SMR" id="Q1I7D4"/>
<dbReference type="STRING" id="384676.PSEEN3728"/>
<dbReference type="GeneID" id="32806772"/>
<dbReference type="KEGG" id="pen:PSEEN3728"/>
<dbReference type="eggNOG" id="COG1024">
    <property type="taxonomic scope" value="Bacteria"/>
</dbReference>
<dbReference type="eggNOG" id="COG1250">
    <property type="taxonomic scope" value="Bacteria"/>
</dbReference>
<dbReference type="HOGENOM" id="CLU_009834_16_3_6"/>
<dbReference type="OrthoDB" id="5389341at2"/>
<dbReference type="UniPathway" id="UPA00659"/>
<dbReference type="Proteomes" id="UP000000658">
    <property type="component" value="Chromosome"/>
</dbReference>
<dbReference type="GO" id="GO:0036125">
    <property type="term" value="C:fatty acid beta-oxidation multienzyme complex"/>
    <property type="evidence" value="ECO:0007669"/>
    <property type="project" value="InterPro"/>
</dbReference>
<dbReference type="GO" id="GO:0008692">
    <property type="term" value="F:3-hydroxybutyryl-CoA epimerase activity"/>
    <property type="evidence" value="ECO:0007669"/>
    <property type="project" value="UniProtKB-UniRule"/>
</dbReference>
<dbReference type="GO" id="GO:0004165">
    <property type="term" value="F:delta(3)-delta(2)-enoyl-CoA isomerase activity"/>
    <property type="evidence" value="ECO:0007669"/>
    <property type="project" value="UniProtKB-UniRule"/>
</dbReference>
<dbReference type="GO" id="GO:0004300">
    <property type="term" value="F:enoyl-CoA hydratase activity"/>
    <property type="evidence" value="ECO:0007669"/>
    <property type="project" value="UniProtKB-UniRule"/>
</dbReference>
<dbReference type="GO" id="GO:0016509">
    <property type="term" value="F:long-chain-3-hydroxyacyl-CoA dehydrogenase activity"/>
    <property type="evidence" value="ECO:0007669"/>
    <property type="project" value="TreeGrafter"/>
</dbReference>
<dbReference type="GO" id="GO:0070403">
    <property type="term" value="F:NAD+ binding"/>
    <property type="evidence" value="ECO:0007669"/>
    <property type="project" value="InterPro"/>
</dbReference>
<dbReference type="GO" id="GO:0006635">
    <property type="term" value="P:fatty acid beta-oxidation"/>
    <property type="evidence" value="ECO:0007669"/>
    <property type="project" value="UniProtKB-UniRule"/>
</dbReference>
<dbReference type="CDD" id="cd06558">
    <property type="entry name" value="crotonase-like"/>
    <property type="match status" value="1"/>
</dbReference>
<dbReference type="FunFam" id="1.10.1040.50:FF:000001">
    <property type="entry name" value="Fatty acid oxidation complex subunit alpha"/>
    <property type="match status" value="1"/>
</dbReference>
<dbReference type="FunFam" id="3.90.226.10:FF:000018">
    <property type="entry name" value="Fatty acid oxidation complex subunit alpha"/>
    <property type="match status" value="1"/>
</dbReference>
<dbReference type="FunFam" id="3.40.50.720:FF:000009">
    <property type="entry name" value="Fatty oxidation complex, alpha subunit"/>
    <property type="match status" value="1"/>
</dbReference>
<dbReference type="Gene3D" id="1.10.1040.50">
    <property type="match status" value="1"/>
</dbReference>
<dbReference type="Gene3D" id="3.90.226.10">
    <property type="entry name" value="2-enoyl-CoA Hydratase, Chain A, domain 1"/>
    <property type="match status" value="1"/>
</dbReference>
<dbReference type="Gene3D" id="3.40.50.720">
    <property type="entry name" value="NAD(P)-binding Rossmann-like Domain"/>
    <property type="match status" value="1"/>
</dbReference>
<dbReference type="HAMAP" id="MF_01621">
    <property type="entry name" value="FadB"/>
    <property type="match status" value="1"/>
</dbReference>
<dbReference type="InterPro" id="IPR006180">
    <property type="entry name" value="3-OHacyl-CoA_DH_CS"/>
</dbReference>
<dbReference type="InterPro" id="IPR006176">
    <property type="entry name" value="3-OHacyl-CoA_DH_NAD-bd"/>
</dbReference>
<dbReference type="InterPro" id="IPR006108">
    <property type="entry name" value="3HC_DH_C"/>
</dbReference>
<dbReference type="InterPro" id="IPR008927">
    <property type="entry name" value="6-PGluconate_DH-like_C_sf"/>
</dbReference>
<dbReference type="InterPro" id="IPR029045">
    <property type="entry name" value="ClpP/crotonase-like_dom_sf"/>
</dbReference>
<dbReference type="InterPro" id="IPR018376">
    <property type="entry name" value="Enoyl-CoA_hyd/isom_CS"/>
</dbReference>
<dbReference type="InterPro" id="IPR001753">
    <property type="entry name" value="Enoyl-CoA_hydra/iso"/>
</dbReference>
<dbReference type="InterPro" id="IPR050136">
    <property type="entry name" value="FA_oxidation_alpha_subunit"/>
</dbReference>
<dbReference type="InterPro" id="IPR012799">
    <property type="entry name" value="FadB"/>
</dbReference>
<dbReference type="InterPro" id="IPR036291">
    <property type="entry name" value="NAD(P)-bd_dom_sf"/>
</dbReference>
<dbReference type="NCBIfam" id="TIGR02437">
    <property type="entry name" value="FadB"/>
    <property type="match status" value="1"/>
</dbReference>
<dbReference type="NCBIfam" id="NF008727">
    <property type="entry name" value="PRK11730.1"/>
    <property type="match status" value="1"/>
</dbReference>
<dbReference type="PANTHER" id="PTHR43612">
    <property type="entry name" value="TRIFUNCTIONAL ENZYME SUBUNIT ALPHA"/>
    <property type="match status" value="1"/>
</dbReference>
<dbReference type="PANTHER" id="PTHR43612:SF3">
    <property type="entry name" value="TRIFUNCTIONAL ENZYME SUBUNIT ALPHA, MITOCHONDRIAL"/>
    <property type="match status" value="1"/>
</dbReference>
<dbReference type="Pfam" id="PF00725">
    <property type="entry name" value="3HCDH"/>
    <property type="match status" value="1"/>
</dbReference>
<dbReference type="Pfam" id="PF02737">
    <property type="entry name" value="3HCDH_N"/>
    <property type="match status" value="1"/>
</dbReference>
<dbReference type="Pfam" id="PF00378">
    <property type="entry name" value="ECH_1"/>
    <property type="match status" value="1"/>
</dbReference>
<dbReference type="SUPFAM" id="SSF48179">
    <property type="entry name" value="6-phosphogluconate dehydrogenase C-terminal domain-like"/>
    <property type="match status" value="2"/>
</dbReference>
<dbReference type="SUPFAM" id="SSF52096">
    <property type="entry name" value="ClpP/crotonase"/>
    <property type="match status" value="1"/>
</dbReference>
<dbReference type="SUPFAM" id="SSF51735">
    <property type="entry name" value="NAD(P)-binding Rossmann-fold domains"/>
    <property type="match status" value="1"/>
</dbReference>
<dbReference type="PROSITE" id="PS00067">
    <property type="entry name" value="3HCDH"/>
    <property type="match status" value="1"/>
</dbReference>
<dbReference type="PROSITE" id="PS00166">
    <property type="entry name" value="ENOYL_COA_HYDRATASE"/>
    <property type="match status" value="1"/>
</dbReference>
<protein>
    <recommendedName>
        <fullName evidence="1">Fatty acid oxidation complex subunit alpha</fullName>
    </recommendedName>
    <domain>
        <recommendedName>
            <fullName evidence="1">Enoyl-CoA hydratase/Delta(3)-cis-Delta(2)-trans-enoyl-CoA isomerase/3-hydroxybutyryl-CoA epimerase</fullName>
            <ecNumber evidence="1">4.2.1.17</ecNumber>
            <ecNumber evidence="1">5.1.2.3</ecNumber>
            <ecNumber evidence="1">5.3.3.8</ecNumber>
        </recommendedName>
    </domain>
    <domain>
        <recommendedName>
            <fullName evidence="1">3-hydroxyacyl-CoA dehydrogenase</fullName>
            <ecNumber evidence="1">1.1.1.35</ecNumber>
        </recommendedName>
    </domain>
</protein>
<accession>Q1I7D4</accession>
<gene>
    <name evidence="1" type="primary">fadB</name>
    <name type="ordered locus">PSEEN3728</name>
</gene>
<feature type="chain" id="PRO_1000069567" description="Fatty acid oxidation complex subunit alpha">
    <location>
        <begin position="1"/>
        <end position="715"/>
    </location>
</feature>
<feature type="region of interest" description="Enoyl-CoA hydratase/isomerase" evidence="1">
    <location>
        <begin position="1"/>
        <end position="190"/>
    </location>
</feature>
<feature type="region of interest" description="3-hydroxyacyl-CoA dehydrogenase" evidence="1">
    <location>
        <begin position="312"/>
        <end position="715"/>
    </location>
</feature>
<feature type="active site" description="For 3-hydroxyacyl-CoA dehydrogenase activity" evidence="1">
    <location>
        <position position="451"/>
    </location>
</feature>
<feature type="binding site" evidence="1">
    <location>
        <position position="297"/>
    </location>
    <ligand>
        <name>substrate</name>
    </ligand>
</feature>
<feature type="binding site" evidence="1">
    <location>
        <position position="325"/>
    </location>
    <ligand>
        <name>NAD(+)</name>
        <dbReference type="ChEBI" id="CHEBI:57540"/>
    </ligand>
</feature>
<feature type="binding site" evidence="1">
    <location>
        <position position="344"/>
    </location>
    <ligand>
        <name>NAD(+)</name>
        <dbReference type="ChEBI" id="CHEBI:57540"/>
    </ligand>
</feature>
<feature type="binding site" evidence="1">
    <location>
        <begin position="401"/>
        <end position="403"/>
    </location>
    <ligand>
        <name>NAD(+)</name>
        <dbReference type="ChEBI" id="CHEBI:57540"/>
    </ligand>
</feature>
<feature type="binding site" evidence="1">
    <location>
        <position position="408"/>
    </location>
    <ligand>
        <name>NAD(+)</name>
        <dbReference type="ChEBI" id="CHEBI:57540"/>
    </ligand>
</feature>
<feature type="binding site" evidence="1">
    <location>
        <position position="430"/>
    </location>
    <ligand>
        <name>NAD(+)</name>
        <dbReference type="ChEBI" id="CHEBI:57540"/>
    </ligand>
</feature>
<feature type="binding site" evidence="1">
    <location>
        <position position="454"/>
    </location>
    <ligand>
        <name>NAD(+)</name>
        <dbReference type="ChEBI" id="CHEBI:57540"/>
    </ligand>
</feature>
<feature type="binding site" evidence="1">
    <location>
        <position position="501"/>
    </location>
    <ligand>
        <name>substrate</name>
    </ligand>
</feature>
<feature type="binding site" evidence="1">
    <location>
        <position position="660"/>
    </location>
    <ligand>
        <name>substrate</name>
    </ligand>
</feature>
<feature type="site" description="Important for catalytic activity" evidence="1">
    <location>
        <position position="120"/>
    </location>
</feature>
<feature type="site" description="Important for catalytic activity" evidence="1">
    <location>
        <position position="140"/>
    </location>
</feature>
<name>FADB_PSEE4</name>
<keyword id="KW-0276">Fatty acid metabolism</keyword>
<keyword id="KW-0413">Isomerase</keyword>
<keyword id="KW-0442">Lipid degradation</keyword>
<keyword id="KW-0443">Lipid metabolism</keyword>
<keyword id="KW-0456">Lyase</keyword>
<keyword id="KW-0511">Multifunctional enzyme</keyword>
<keyword id="KW-0520">NAD</keyword>
<keyword id="KW-0560">Oxidoreductase</keyword>
<comment type="function">
    <text evidence="1">Involved in the aerobic and anaerobic degradation of long-chain fatty acids via beta-oxidation cycle. Catalyzes the formation of 3-oxoacyl-CoA from enoyl-CoA via L-3-hydroxyacyl-CoA. It can also use D-3-hydroxyacyl-CoA and cis-3-enoyl-CoA as substrate.</text>
</comment>
<comment type="catalytic activity">
    <reaction evidence="1">
        <text>a (3S)-3-hydroxyacyl-CoA + NAD(+) = a 3-oxoacyl-CoA + NADH + H(+)</text>
        <dbReference type="Rhea" id="RHEA:22432"/>
        <dbReference type="ChEBI" id="CHEBI:15378"/>
        <dbReference type="ChEBI" id="CHEBI:57318"/>
        <dbReference type="ChEBI" id="CHEBI:57540"/>
        <dbReference type="ChEBI" id="CHEBI:57945"/>
        <dbReference type="ChEBI" id="CHEBI:90726"/>
        <dbReference type="EC" id="1.1.1.35"/>
    </reaction>
</comment>
<comment type="catalytic activity">
    <reaction evidence="1">
        <text>a (3S)-3-hydroxyacyl-CoA = a (2E)-enoyl-CoA + H2O</text>
        <dbReference type="Rhea" id="RHEA:16105"/>
        <dbReference type="ChEBI" id="CHEBI:15377"/>
        <dbReference type="ChEBI" id="CHEBI:57318"/>
        <dbReference type="ChEBI" id="CHEBI:58856"/>
        <dbReference type="EC" id="4.2.1.17"/>
    </reaction>
</comment>
<comment type="catalytic activity">
    <reaction evidence="1">
        <text>a 4-saturated-(3S)-3-hydroxyacyl-CoA = a (3E)-enoyl-CoA + H2O</text>
        <dbReference type="Rhea" id="RHEA:20724"/>
        <dbReference type="ChEBI" id="CHEBI:15377"/>
        <dbReference type="ChEBI" id="CHEBI:58521"/>
        <dbReference type="ChEBI" id="CHEBI:137480"/>
        <dbReference type="EC" id="4.2.1.17"/>
    </reaction>
</comment>
<comment type="catalytic activity">
    <reaction evidence="1">
        <text>(3S)-3-hydroxybutanoyl-CoA = (3R)-3-hydroxybutanoyl-CoA</text>
        <dbReference type="Rhea" id="RHEA:21760"/>
        <dbReference type="ChEBI" id="CHEBI:57315"/>
        <dbReference type="ChEBI" id="CHEBI:57316"/>
        <dbReference type="EC" id="5.1.2.3"/>
    </reaction>
</comment>
<comment type="catalytic activity">
    <reaction evidence="1">
        <text>a (3Z)-enoyl-CoA = a 4-saturated (2E)-enoyl-CoA</text>
        <dbReference type="Rhea" id="RHEA:45900"/>
        <dbReference type="ChEBI" id="CHEBI:85097"/>
        <dbReference type="ChEBI" id="CHEBI:85489"/>
        <dbReference type="EC" id="5.3.3.8"/>
    </reaction>
</comment>
<comment type="catalytic activity">
    <reaction evidence="1">
        <text>a (3E)-enoyl-CoA = a 4-saturated (2E)-enoyl-CoA</text>
        <dbReference type="Rhea" id="RHEA:45228"/>
        <dbReference type="ChEBI" id="CHEBI:58521"/>
        <dbReference type="ChEBI" id="CHEBI:85097"/>
        <dbReference type="EC" id="5.3.3.8"/>
    </reaction>
</comment>
<comment type="pathway">
    <text evidence="1">Lipid metabolism; fatty acid beta-oxidation.</text>
</comment>
<comment type="subunit">
    <text evidence="1">Heterotetramer of two alpha chains (FadB) and two beta chains (FadA).</text>
</comment>
<comment type="similarity">
    <text evidence="1">In the N-terminal section; belongs to the enoyl-CoA hydratase/isomerase family.</text>
</comment>
<comment type="similarity">
    <text evidence="1">In the C-terminal section; belongs to the 3-hydroxyacyl-CoA dehydrogenase family.</text>
</comment>
<organism>
    <name type="scientific">Pseudomonas entomophila (strain L48)</name>
    <dbReference type="NCBI Taxonomy" id="384676"/>
    <lineage>
        <taxon>Bacteria</taxon>
        <taxon>Pseudomonadati</taxon>
        <taxon>Pseudomonadota</taxon>
        <taxon>Gammaproteobacteria</taxon>
        <taxon>Pseudomonadales</taxon>
        <taxon>Pseudomonadaceae</taxon>
        <taxon>Pseudomonas</taxon>
    </lineage>
</organism>